<evidence type="ECO:0000255" key="1">
    <source>
        <dbReference type="HAMAP-Rule" id="MF_00098"/>
    </source>
</evidence>
<comment type="function">
    <text evidence="1">Is required not only for elongation of protein synthesis but also for the initiation of all mRNA translation through initiator tRNA(fMet) aminoacylation.</text>
</comment>
<comment type="catalytic activity">
    <reaction evidence="1">
        <text>tRNA(Met) + L-methionine + ATP = L-methionyl-tRNA(Met) + AMP + diphosphate</text>
        <dbReference type="Rhea" id="RHEA:13481"/>
        <dbReference type="Rhea" id="RHEA-COMP:9667"/>
        <dbReference type="Rhea" id="RHEA-COMP:9698"/>
        <dbReference type="ChEBI" id="CHEBI:30616"/>
        <dbReference type="ChEBI" id="CHEBI:33019"/>
        <dbReference type="ChEBI" id="CHEBI:57844"/>
        <dbReference type="ChEBI" id="CHEBI:78442"/>
        <dbReference type="ChEBI" id="CHEBI:78530"/>
        <dbReference type="ChEBI" id="CHEBI:456215"/>
        <dbReference type="EC" id="6.1.1.10"/>
    </reaction>
</comment>
<comment type="cofactor">
    <cofactor evidence="1">
        <name>Zn(2+)</name>
        <dbReference type="ChEBI" id="CHEBI:29105"/>
    </cofactor>
    <text evidence="1">Binds 1 zinc ion per subunit.</text>
</comment>
<comment type="subunit">
    <text evidence="1">Homodimer.</text>
</comment>
<comment type="subcellular location">
    <subcellularLocation>
        <location evidence="1">Cytoplasm</location>
    </subcellularLocation>
</comment>
<comment type="similarity">
    <text evidence="1">Belongs to the class-I aminoacyl-tRNA synthetase family. MetG type 1 subfamily.</text>
</comment>
<protein>
    <recommendedName>
        <fullName evidence="1">Methionine--tRNA ligase</fullName>
        <ecNumber evidence="1">6.1.1.10</ecNumber>
    </recommendedName>
    <alternativeName>
        <fullName evidence="1">Methionyl-tRNA synthetase</fullName>
        <shortName evidence="1">MetRS</shortName>
    </alternativeName>
</protein>
<proteinExistence type="inferred from homology"/>
<feature type="chain" id="PRO_1000093730" description="Methionine--tRNA ligase">
    <location>
        <begin position="1"/>
        <end position="677"/>
    </location>
</feature>
<feature type="domain" description="tRNA-binding" evidence="1">
    <location>
        <begin position="575"/>
        <end position="677"/>
    </location>
</feature>
<feature type="short sequence motif" description="'HIGH' region">
    <location>
        <begin position="15"/>
        <end position="25"/>
    </location>
</feature>
<feature type="short sequence motif" description="'KMSKS' region">
    <location>
        <begin position="333"/>
        <end position="337"/>
    </location>
</feature>
<feature type="binding site" evidence="1">
    <location>
        <position position="146"/>
    </location>
    <ligand>
        <name>Zn(2+)</name>
        <dbReference type="ChEBI" id="CHEBI:29105"/>
    </ligand>
</feature>
<feature type="binding site" evidence="1">
    <location>
        <position position="149"/>
    </location>
    <ligand>
        <name>Zn(2+)</name>
        <dbReference type="ChEBI" id="CHEBI:29105"/>
    </ligand>
</feature>
<feature type="binding site" evidence="1">
    <location>
        <position position="159"/>
    </location>
    <ligand>
        <name>Zn(2+)</name>
        <dbReference type="ChEBI" id="CHEBI:29105"/>
    </ligand>
</feature>
<feature type="binding site" evidence="1">
    <location>
        <position position="162"/>
    </location>
    <ligand>
        <name>Zn(2+)</name>
        <dbReference type="ChEBI" id="CHEBI:29105"/>
    </ligand>
</feature>
<feature type="binding site" evidence="1">
    <location>
        <position position="336"/>
    </location>
    <ligand>
        <name>ATP</name>
        <dbReference type="ChEBI" id="CHEBI:30616"/>
    </ligand>
</feature>
<organism>
    <name type="scientific">Salmonella newport (strain SL254)</name>
    <dbReference type="NCBI Taxonomy" id="423368"/>
    <lineage>
        <taxon>Bacteria</taxon>
        <taxon>Pseudomonadati</taxon>
        <taxon>Pseudomonadota</taxon>
        <taxon>Gammaproteobacteria</taxon>
        <taxon>Enterobacterales</taxon>
        <taxon>Enterobacteriaceae</taxon>
        <taxon>Salmonella</taxon>
    </lineage>
</organism>
<reference key="1">
    <citation type="journal article" date="2011" name="J. Bacteriol.">
        <title>Comparative genomics of 28 Salmonella enterica isolates: evidence for CRISPR-mediated adaptive sublineage evolution.</title>
        <authorList>
            <person name="Fricke W.F."/>
            <person name="Mammel M.K."/>
            <person name="McDermott P.F."/>
            <person name="Tartera C."/>
            <person name="White D.G."/>
            <person name="Leclerc J.E."/>
            <person name="Ravel J."/>
            <person name="Cebula T.A."/>
        </authorList>
    </citation>
    <scope>NUCLEOTIDE SEQUENCE [LARGE SCALE GENOMIC DNA]</scope>
    <source>
        <strain>SL254</strain>
    </source>
</reference>
<accession>B4SXY7</accession>
<gene>
    <name evidence="1" type="primary">metG</name>
    <name type="ordered locus">SNSL254_A2344</name>
</gene>
<keyword id="KW-0030">Aminoacyl-tRNA synthetase</keyword>
<keyword id="KW-0067">ATP-binding</keyword>
<keyword id="KW-0963">Cytoplasm</keyword>
<keyword id="KW-0436">Ligase</keyword>
<keyword id="KW-0479">Metal-binding</keyword>
<keyword id="KW-0547">Nucleotide-binding</keyword>
<keyword id="KW-0648">Protein biosynthesis</keyword>
<keyword id="KW-0694">RNA-binding</keyword>
<keyword id="KW-0820">tRNA-binding</keyword>
<keyword id="KW-0862">Zinc</keyword>
<dbReference type="EC" id="6.1.1.10" evidence="1"/>
<dbReference type="EMBL" id="CP001113">
    <property type="protein sequence ID" value="ACF61778.1"/>
    <property type="molecule type" value="Genomic_DNA"/>
</dbReference>
<dbReference type="RefSeq" id="WP_000195330.1">
    <property type="nucleotide sequence ID" value="NZ_CCMR01000002.1"/>
</dbReference>
<dbReference type="SMR" id="B4SXY7"/>
<dbReference type="KEGG" id="see:SNSL254_A2344"/>
<dbReference type="HOGENOM" id="CLU_009710_7_0_6"/>
<dbReference type="Proteomes" id="UP000008824">
    <property type="component" value="Chromosome"/>
</dbReference>
<dbReference type="GO" id="GO:0005829">
    <property type="term" value="C:cytosol"/>
    <property type="evidence" value="ECO:0007669"/>
    <property type="project" value="TreeGrafter"/>
</dbReference>
<dbReference type="GO" id="GO:0005524">
    <property type="term" value="F:ATP binding"/>
    <property type="evidence" value="ECO:0007669"/>
    <property type="project" value="UniProtKB-UniRule"/>
</dbReference>
<dbReference type="GO" id="GO:0046872">
    <property type="term" value="F:metal ion binding"/>
    <property type="evidence" value="ECO:0007669"/>
    <property type="project" value="UniProtKB-KW"/>
</dbReference>
<dbReference type="GO" id="GO:0004825">
    <property type="term" value="F:methionine-tRNA ligase activity"/>
    <property type="evidence" value="ECO:0007669"/>
    <property type="project" value="UniProtKB-UniRule"/>
</dbReference>
<dbReference type="GO" id="GO:0000049">
    <property type="term" value="F:tRNA binding"/>
    <property type="evidence" value="ECO:0007669"/>
    <property type="project" value="UniProtKB-KW"/>
</dbReference>
<dbReference type="GO" id="GO:0006431">
    <property type="term" value="P:methionyl-tRNA aminoacylation"/>
    <property type="evidence" value="ECO:0007669"/>
    <property type="project" value="UniProtKB-UniRule"/>
</dbReference>
<dbReference type="CDD" id="cd07957">
    <property type="entry name" value="Anticodon_Ia_Met"/>
    <property type="match status" value="1"/>
</dbReference>
<dbReference type="CDD" id="cd00814">
    <property type="entry name" value="MetRS_core"/>
    <property type="match status" value="1"/>
</dbReference>
<dbReference type="CDD" id="cd02800">
    <property type="entry name" value="tRNA_bind_EcMetRS_like"/>
    <property type="match status" value="1"/>
</dbReference>
<dbReference type="FunFam" id="1.10.730.10:FF:000005">
    <property type="entry name" value="Methionine--tRNA ligase"/>
    <property type="match status" value="1"/>
</dbReference>
<dbReference type="FunFam" id="2.20.28.20:FF:000001">
    <property type="entry name" value="Methionine--tRNA ligase"/>
    <property type="match status" value="1"/>
</dbReference>
<dbReference type="FunFam" id="2.40.50.140:FF:000042">
    <property type="entry name" value="Methionine--tRNA ligase"/>
    <property type="match status" value="1"/>
</dbReference>
<dbReference type="Gene3D" id="3.40.50.620">
    <property type="entry name" value="HUPs"/>
    <property type="match status" value="1"/>
</dbReference>
<dbReference type="Gene3D" id="1.10.730.10">
    <property type="entry name" value="Isoleucyl-tRNA Synthetase, Domain 1"/>
    <property type="match status" value="1"/>
</dbReference>
<dbReference type="Gene3D" id="2.20.28.20">
    <property type="entry name" value="Methionyl-tRNA synthetase, Zn-domain"/>
    <property type="match status" value="1"/>
</dbReference>
<dbReference type="Gene3D" id="2.40.50.140">
    <property type="entry name" value="Nucleic acid-binding proteins"/>
    <property type="match status" value="1"/>
</dbReference>
<dbReference type="HAMAP" id="MF_00098">
    <property type="entry name" value="Met_tRNA_synth_type1"/>
    <property type="match status" value="1"/>
</dbReference>
<dbReference type="InterPro" id="IPR001412">
    <property type="entry name" value="aa-tRNA-synth_I_CS"/>
</dbReference>
<dbReference type="InterPro" id="IPR041872">
    <property type="entry name" value="Anticodon_Met"/>
</dbReference>
<dbReference type="InterPro" id="IPR004495">
    <property type="entry name" value="Met-tRNA-synth_bsu_C"/>
</dbReference>
<dbReference type="InterPro" id="IPR023458">
    <property type="entry name" value="Met-tRNA_ligase_1"/>
</dbReference>
<dbReference type="InterPro" id="IPR014758">
    <property type="entry name" value="Met-tRNA_synth"/>
</dbReference>
<dbReference type="InterPro" id="IPR015413">
    <property type="entry name" value="Methionyl/Leucyl_tRNA_Synth"/>
</dbReference>
<dbReference type="InterPro" id="IPR033911">
    <property type="entry name" value="MetRS_core"/>
</dbReference>
<dbReference type="InterPro" id="IPR029038">
    <property type="entry name" value="MetRS_Zn"/>
</dbReference>
<dbReference type="InterPro" id="IPR012340">
    <property type="entry name" value="NA-bd_OB-fold"/>
</dbReference>
<dbReference type="InterPro" id="IPR014729">
    <property type="entry name" value="Rossmann-like_a/b/a_fold"/>
</dbReference>
<dbReference type="InterPro" id="IPR002547">
    <property type="entry name" value="tRNA-bd_dom"/>
</dbReference>
<dbReference type="InterPro" id="IPR009080">
    <property type="entry name" value="tRNAsynth_Ia_anticodon-bd"/>
</dbReference>
<dbReference type="NCBIfam" id="TIGR00398">
    <property type="entry name" value="metG"/>
    <property type="match status" value="1"/>
</dbReference>
<dbReference type="NCBIfam" id="TIGR00399">
    <property type="entry name" value="metG_C_term"/>
    <property type="match status" value="1"/>
</dbReference>
<dbReference type="NCBIfam" id="NF001100">
    <property type="entry name" value="PRK00133.1"/>
    <property type="match status" value="1"/>
</dbReference>
<dbReference type="PANTHER" id="PTHR45765">
    <property type="entry name" value="METHIONINE--TRNA LIGASE"/>
    <property type="match status" value="1"/>
</dbReference>
<dbReference type="PANTHER" id="PTHR45765:SF1">
    <property type="entry name" value="METHIONINE--TRNA LIGASE, CYTOPLASMIC"/>
    <property type="match status" value="1"/>
</dbReference>
<dbReference type="Pfam" id="PF19303">
    <property type="entry name" value="Anticodon_3"/>
    <property type="match status" value="1"/>
</dbReference>
<dbReference type="Pfam" id="PF09334">
    <property type="entry name" value="tRNA-synt_1g"/>
    <property type="match status" value="1"/>
</dbReference>
<dbReference type="Pfam" id="PF01588">
    <property type="entry name" value="tRNA_bind"/>
    <property type="match status" value="1"/>
</dbReference>
<dbReference type="PRINTS" id="PR01041">
    <property type="entry name" value="TRNASYNTHMET"/>
</dbReference>
<dbReference type="SUPFAM" id="SSF47323">
    <property type="entry name" value="Anticodon-binding domain of a subclass of class I aminoacyl-tRNA synthetases"/>
    <property type="match status" value="1"/>
</dbReference>
<dbReference type="SUPFAM" id="SSF57770">
    <property type="entry name" value="Methionyl-tRNA synthetase (MetRS), Zn-domain"/>
    <property type="match status" value="1"/>
</dbReference>
<dbReference type="SUPFAM" id="SSF50249">
    <property type="entry name" value="Nucleic acid-binding proteins"/>
    <property type="match status" value="1"/>
</dbReference>
<dbReference type="SUPFAM" id="SSF52374">
    <property type="entry name" value="Nucleotidylyl transferase"/>
    <property type="match status" value="1"/>
</dbReference>
<dbReference type="PROSITE" id="PS00178">
    <property type="entry name" value="AA_TRNA_LIGASE_I"/>
    <property type="match status" value="1"/>
</dbReference>
<dbReference type="PROSITE" id="PS50886">
    <property type="entry name" value="TRBD"/>
    <property type="match status" value="1"/>
</dbReference>
<name>SYM_SALNS</name>
<sequence>MTQVAKKILVTCALPYANGSIHLGHMLEHIQADVWVRYQRMRGHEVNFICADDAHGTPIMLKAQQLGITPEQMIGEMSQEHQTDFAGFNISYDNYHSTHSDENRELSELIYTRLKENGFIKNRTISQLYDPEKGMFLPDRFVKGTCPKCKSADQYGDNCEVCGATYSPTELIEPKSVVSGATPVMRDSEHFFFDLPSFSEMLQAWTRSGALQEQVANKMQEWFESGLQQWDISRDAPYFGFEIPNAPGKYFYVWLDAPIGYMGSFKNLCDKRGDTTSFDEYWKKDSDAELYHFIGKDIVYFHSLFWPAMLEGSHFRKPTNLFVHGYVTVNGAKMSKSRGTFIKASTWLKHFDADSLRYYYTAKLSSRIDDIDLNLEDFVQRVNADIVNKVVNLASRNAGFINKRFDGVLAAELADPQLYKTFTDAAAVIGEAWESREFGKAIREIMALADIANRYVDEQAPWVVAKQEGRDADLQAICSMGINLFRVLMTYLKPVLPTLSERVEAFLNSELNWDAIEQPLLGHKVNTFKALYNRIDMKQVEALVEASKEEVKAAAAPVTGPLADFPIQETITFDDFAKIDLRVALIENAEFVDGSDKLLRLTLDLGGEKRNVFSGIRSAYPDPQALIGRQTVMVANLAPRKMRFGVSEGMVMAAGPGGKDIFLLSPDDGAKPGQQVK</sequence>